<accession>A5DHV9</accession>
<feature type="chain" id="PRO_0000393840" description="Methylthioribulose-1-phosphate dehydratase">
    <location>
        <begin position="1"/>
        <end position="262"/>
    </location>
</feature>
<feature type="active site" description="Proton donor/acceptor" evidence="1">
    <location>
        <position position="158"/>
    </location>
</feature>
<feature type="binding site" evidence="1">
    <location>
        <position position="115"/>
    </location>
    <ligand>
        <name>substrate</name>
    </ligand>
</feature>
<feature type="binding site" evidence="1">
    <location>
        <position position="133"/>
    </location>
    <ligand>
        <name>Zn(2+)</name>
        <dbReference type="ChEBI" id="CHEBI:29105"/>
    </ligand>
</feature>
<feature type="binding site" evidence="1">
    <location>
        <position position="135"/>
    </location>
    <ligand>
        <name>Zn(2+)</name>
        <dbReference type="ChEBI" id="CHEBI:29105"/>
    </ligand>
</feature>
<feature type="binding site" evidence="1">
    <location>
        <position position="223"/>
    </location>
    <ligand>
        <name>Zn(2+)</name>
        <dbReference type="ChEBI" id="CHEBI:29105"/>
    </ligand>
</feature>
<evidence type="ECO:0000255" key="1">
    <source>
        <dbReference type="HAMAP-Rule" id="MF_03116"/>
    </source>
</evidence>
<proteinExistence type="inferred from homology"/>
<keyword id="KW-0028">Amino-acid biosynthesis</keyword>
<keyword id="KW-0963">Cytoplasm</keyword>
<keyword id="KW-0456">Lyase</keyword>
<keyword id="KW-0479">Metal-binding</keyword>
<keyword id="KW-0486">Methionine biosynthesis</keyword>
<keyword id="KW-1185">Reference proteome</keyword>
<keyword id="KW-0862">Zinc</keyword>
<gene>
    <name evidence="1" type="primary">MDE1</name>
    <name type="ORF">PGUG_02860</name>
</gene>
<protein>
    <recommendedName>
        <fullName evidence="1">Methylthioribulose-1-phosphate dehydratase</fullName>
        <shortName evidence="1">MTRu-1-P dehydratase</shortName>
        <ecNumber evidence="1">4.2.1.109</ecNumber>
    </recommendedName>
</protein>
<organism>
    <name type="scientific">Meyerozyma guilliermondii (strain ATCC 6260 / CBS 566 / DSM 6381 / JCM 1539 / NBRC 10279 / NRRL Y-324)</name>
    <name type="common">Yeast</name>
    <name type="synonym">Candida guilliermondii</name>
    <dbReference type="NCBI Taxonomy" id="294746"/>
    <lineage>
        <taxon>Eukaryota</taxon>
        <taxon>Fungi</taxon>
        <taxon>Dikarya</taxon>
        <taxon>Ascomycota</taxon>
        <taxon>Saccharomycotina</taxon>
        <taxon>Pichiomycetes</taxon>
        <taxon>Debaryomycetaceae</taxon>
        <taxon>Meyerozyma</taxon>
    </lineage>
</organism>
<name>MTNB_PICGU</name>
<reference key="1">
    <citation type="journal article" date="2009" name="Nature">
        <title>Evolution of pathogenicity and sexual reproduction in eight Candida genomes.</title>
        <authorList>
            <person name="Butler G."/>
            <person name="Rasmussen M.D."/>
            <person name="Lin M.F."/>
            <person name="Santos M.A.S."/>
            <person name="Sakthikumar S."/>
            <person name="Munro C.A."/>
            <person name="Rheinbay E."/>
            <person name="Grabherr M."/>
            <person name="Forche A."/>
            <person name="Reedy J.L."/>
            <person name="Agrafioti I."/>
            <person name="Arnaud M.B."/>
            <person name="Bates S."/>
            <person name="Brown A.J.P."/>
            <person name="Brunke S."/>
            <person name="Costanzo M.C."/>
            <person name="Fitzpatrick D.A."/>
            <person name="de Groot P.W.J."/>
            <person name="Harris D."/>
            <person name="Hoyer L.L."/>
            <person name="Hube B."/>
            <person name="Klis F.M."/>
            <person name="Kodira C."/>
            <person name="Lennard N."/>
            <person name="Logue M.E."/>
            <person name="Martin R."/>
            <person name="Neiman A.M."/>
            <person name="Nikolaou E."/>
            <person name="Quail M.A."/>
            <person name="Quinn J."/>
            <person name="Santos M.C."/>
            <person name="Schmitzberger F.F."/>
            <person name="Sherlock G."/>
            <person name="Shah P."/>
            <person name="Silverstein K.A.T."/>
            <person name="Skrzypek M.S."/>
            <person name="Soll D."/>
            <person name="Staggs R."/>
            <person name="Stansfield I."/>
            <person name="Stumpf M.P.H."/>
            <person name="Sudbery P.E."/>
            <person name="Srikantha T."/>
            <person name="Zeng Q."/>
            <person name="Berman J."/>
            <person name="Berriman M."/>
            <person name="Heitman J."/>
            <person name="Gow N.A.R."/>
            <person name="Lorenz M.C."/>
            <person name="Birren B.W."/>
            <person name="Kellis M."/>
            <person name="Cuomo C.A."/>
        </authorList>
    </citation>
    <scope>NUCLEOTIDE SEQUENCE [LARGE SCALE GENOMIC DNA]</scope>
    <source>
        <strain>ATCC 6260 / CBS 566 / DSM 6381 / JCM 1539 / NBRC 10279 / NRRL Y-324</strain>
    </source>
</reference>
<sequence>MSAPCHCSAPKANIPALDDKYLSDDPAHPANLICELCRLFYDNNWVTGTGGGISIRDVKGENPNLVYIAPSGIQKERLQPWEMFVVDLNGEKLLRTPNECPQELTKSYKYKPSACTPLFMSCYTMREAGACIHTHSQSAVMCTLLWGDKVEFEISHIEQIKALPQLKLNESTSKIEKVGSMQYYDKLVIPIIENTPHEEDLTDSLQEAIRNYPGTTAVLVRRHGIYVWGEDVWKAKVYNEALDYLLELAVKMKTAGMDTVRK</sequence>
<dbReference type="EC" id="4.2.1.109" evidence="1"/>
<dbReference type="EMBL" id="CH408157">
    <property type="protein sequence ID" value="EDK38762.2"/>
    <property type="molecule type" value="Genomic_DNA"/>
</dbReference>
<dbReference type="RefSeq" id="XP_001485131.1">
    <property type="nucleotide sequence ID" value="XM_001485081.1"/>
</dbReference>
<dbReference type="SMR" id="A5DHV9"/>
<dbReference type="FunCoup" id="A5DHV9">
    <property type="interactions" value="256"/>
</dbReference>
<dbReference type="STRING" id="294746.A5DHV9"/>
<dbReference type="GeneID" id="5127370"/>
<dbReference type="KEGG" id="pgu:PGUG_02860"/>
<dbReference type="VEuPathDB" id="FungiDB:PGUG_02860"/>
<dbReference type="eggNOG" id="KOG2631">
    <property type="taxonomic scope" value="Eukaryota"/>
</dbReference>
<dbReference type="HOGENOM" id="CLU_006033_4_0_1"/>
<dbReference type="InParanoid" id="A5DHV9"/>
<dbReference type="OMA" id="WFPGTSG"/>
<dbReference type="OrthoDB" id="191080at2759"/>
<dbReference type="UniPathway" id="UPA00904">
    <property type="reaction ID" value="UER00875"/>
</dbReference>
<dbReference type="Proteomes" id="UP000001997">
    <property type="component" value="Unassembled WGS sequence"/>
</dbReference>
<dbReference type="GO" id="GO:0005737">
    <property type="term" value="C:cytoplasm"/>
    <property type="evidence" value="ECO:0007669"/>
    <property type="project" value="UniProtKB-SubCell"/>
</dbReference>
<dbReference type="GO" id="GO:0046570">
    <property type="term" value="F:methylthioribulose 1-phosphate dehydratase activity"/>
    <property type="evidence" value="ECO:0007669"/>
    <property type="project" value="UniProtKB-UniRule"/>
</dbReference>
<dbReference type="GO" id="GO:0008270">
    <property type="term" value="F:zinc ion binding"/>
    <property type="evidence" value="ECO:0007669"/>
    <property type="project" value="UniProtKB-UniRule"/>
</dbReference>
<dbReference type="GO" id="GO:0019509">
    <property type="term" value="P:L-methionine salvage from methylthioadenosine"/>
    <property type="evidence" value="ECO:0007669"/>
    <property type="project" value="UniProtKB-UniRule"/>
</dbReference>
<dbReference type="FunFam" id="3.40.225.10:FF:000003">
    <property type="entry name" value="Methylthioribulose-1-phosphate dehydratase"/>
    <property type="match status" value="1"/>
</dbReference>
<dbReference type="Gene3D" id="3.40.225.10">
    <property type="entry name" value="Class II aldolase/adducin N-terminal domain"/>
    <property type="match status" value="1"/>
</dbReference>
<dbReference type="HAMAP" id="MF_03116">
    <property type="entry name" value="Salvage_MtnB_euk"/>
    <property type="match status" value="1"/>
</dbReference>
<dbReference type="InterPro" id="IPR001303">
    <property type="entry name" value="Aldolase_II/adducin_N"/>
</dbReference>
<dbReference type="InterPro" id="IPR036409">
    <property type="entry name" value="Aldolase_II/adducin_N_sf"/>
</dbReference>
<dbReference type="InterPro" id="IPR017714">
    <property type="entry name" value="MethylthioRu-1-P_deHdtase_MtnB"/>
</dbReference>
<dbReference type="InterPro" id="IPR027514">
    <property type="entry name" value="Salvage_MtnB_euk"/>
</dbReference>
<dbReference type="NCBIfam" id="TIGR03328">
    <property type="entry name" value="salvage_mtnB"/>
    <property type="match status" value="1"/>
</dbReference>
<dbReference type="PANTHER" id="PTHR10640">
    <property type="entry name" value="METHYLTHIORIBULOSE-1-PHOSPHATE DEHYDRATASE"/>
    <property type="match status" value="1"/>
</dbReference>
<dbReference type="PANTHER" id="PTHR10640:SF7">
    <property type="entry name" value="METHYLTHIORIBULOSE-1-PHOSPHATE DEHYDRATASE"/>
    <property type="match status" value="1"/>
</dbReference>
<dbReference type="Pfam" id="PF00596">
    <property type="entry name" value="Aldolase_II"/>
    <property type="match status" value="1"/>
</dbReference>
<dbReference type="SMART" id="SM01007">
    <property type="entry name" value="Aldolase_II"/>
    <property type="match status" value="1"/>
</dbReference>
<dbReference type="SUPFAM" id="SSF53639">
    <property type="entry name" value="AraD/HMP-PK domain-like"/>
    <property type="match status" value="1"/>
</dbReference>
<comment type="function">
    <text evidence="1">Catalyzes the dehydration of methylthioribulose-1-phosphate (MTRu-1-P) into 2,3-diketo-5-methylthiopentyl-1-phosphate (DK-MTP-1-P).</text>
</comment>
<comment type="catalytic activity">
    <reaction evidence="1">
        <text>5-(methylsulfanyl)-D-ribulose 1-phosphate = 5-methylsulfanyl-2,3-dioxopentyl phosphate + H2O</text>
        <dbReference type="Rhea" id="RHEA:15549"/>
        <dbReference type="ChEBI" id="CHEBI:15377"/>
        <dbReference type="ChEBI" id="CHEBI:58548"/>
        <dbReference type="ChEBI" id="CHEBI:58828"/>
        <dbReference type="EC" id="4.2.1.109"/>
    </reaction>
</comment>
<comment type="cofactor">
    <cofactor evidence="1">
        <name>Zn(2+)</name>
        <dbReference type="ChEBI" id="CHEBI:29105"/>
    </cofactor>
    <text evidence="1">Binds 1 zinc ion per subunit.</text>
</comment>
<comment type="pathway">
    <text evidence="1">Amino-acid biosynthesis; L-methionine biosynthesis via salvage pathway; L-methionine from S-methyl-5-thio-alpha-D-ribose 1-phosphate: step 2/6.</text>
</comment>
<comment type="subcellular location">
    <subcellularLocation>
        <location evidence="1">Cytoplasm</location>
    </subcellularLocation>
</comment>
<comment type="similarity">
    <text evidence="1">Belongs to the aldolase class II family. MtnB subfamily.</text>
</comment>